<comment type="function">
    <text evidence="1">May control the interaction of photosystem II (PSII) cores with the light-harvesting antenna, regulates electron flow through the 2 photosystem reaction centers. PSII is a light-driven water plastoquinone oxidoreductase, using light energy to abstract electrons from H(2)O, generating a proton gradient subsequently used for ATP formation.</text>
</comment>
<comment type="subunit">
    <text evidence="1">PSII is composed of 1 copy each of membrane proteins PsbA, PsbB, PsbC, PsbD, PsbE, PsbF, PsbH, PsbI, PsbJ, PsbK, PsbL, PsbM, PsbT, PsbY, PsbZ, Psb30/Ycf12, at least 3 peripheral proteins of the oxygen-evolving complex and a large number of cofactors. It forms dimeric complexes.</text>
</comment>
<comment type="subcellular location">
    <subcellularLocation>
        <location evidence="1">Plastid</location>
        <location evidence="1">Chloroplast thylakoid membrane</location>
        <topology evidence="1">Multi-pass membrane protein</topology>
    </subcellularLocation>
</comment>
<comment type="similarity">
    <text evidence="1">Belongs to the PsbZ family.</text>
</comment>
<proteinExistence type="inferred from homology"/>
<protein>
    <recommendedName>
        <fullName evidence="1">Photosystem II reaction center protein Z</fullName>
        <shortName evidence="1">PSII-Z</shortName>
    </recommendedName>
</protein>
<sequence length="62" mass="6554">MLFIFQLTLLAFIGLSLALVIGVPVLLASPEGWAQSKGLVFSGSALWMLLVFVVGALNSFVS</sequence>
<accession>Q0P3M1</accession>
<gene>
    <name evidence="1" type="primary">psbZ</name>
    <name type="ordered locus">OtCpg00310</name>
</gene>
<dbReference type="EMBL" id="CR954199">
    <property type="protein sequence ID" value="CAL36356.1"/>
    <property type="molecule type" value="Genomic_DNA"/>
</dbReference>
<dbReference type="SMR" id="Q0P3M1"/>
<dbReference type="FunCoup" id="Q0P3M1">
    <property type="interactions" value="38"/>
</dbReference>
<dbReference type="STRING" id="70448.Q0P3M1"/>
<dbReference type="KEGG" id="ota:OstapCp31"/>
<dbReference type="eggNOG" id="ENOG502S7KE">
    <property type="taxonomic scope" value="Eukaryota"/>
</dbReference>
<dbReference type="InParanoid" id="Q0P3M1"/>
<dbReference type="Proteomes" id="UP000009170">
    <property type="component" value="Chloroplast"/>
</dbReference>
<dbReference type="GO" id="GO:0009535">
    <property type="term" value="C:chloroplast thylakoid membrane"/>
    <property type="evidence" value="ECO:0007669"/>
    <property type="project" value="UniProtKB-SubCell"/>
</dbReference>
<dbReference type="GO" id="GO:0009539">
    <property type="term" value="C:photosystem II reaction center"/>
    <property type="evidence" value="ECO:0007669"/>
    <property type="project" value="InterPro"/>
</dbReference>
<dbReference type="GO" id="GO:0015979">
    <property type="term" value="P:photosynthesis"/>
    <property type="evidence" value="ECO:0007669"/>
    <property type="project" value="UniProtKB-UniRule"/>
</dbReference>
<dbReference type="GO" id="GO:0042549">
    <property type="term" value="P:photosystem II stabilization"/>
    <property type="evidence" value="ECO:0007669"/>
    <property type="project" value="InterPro"/>
</dbReference>
<dbReference type="Gene3D" id="1.10.287.740">
    <property type="entry name" value="Photosystem II PsbZ, reaction centre"/>
    <property type="match status" value="1"/>
</dbReference>
<dbReference type="HAMAP" id="MF_00644">
    <property type="entry name" value="PSII_PsbZ"/>
    <property type="match status" value="1"/>
</dbReference>
<dbReference type="InterPro" id="IPR002644">
    <property type="entry name" value="PSII_PsbZ"/>
</dbReference>
<dbReference type="InterPro" id="IPR036512">
    <property type="entry name" value="PSII_PsbZ_sf"/>
</dbReference>
<dbReference type="NCBIfam" id="TIGR03043">
    <property type="entry name" value="PS_II_psbZ"/>
    <property type="match status" value="1"/>
</dbReference>
<dbReference type="PANTHER" id="PTHR34971">
    <property type="entry name" value="PHOTOSYSTEM II REACTION CENTER PROTEIN Z"/>
    <property type="match status" value="1"/>
</dbReference>
<dbReference type="PANTHER" id="PTHR34971:SF2">
    <property type="entry name" value="PHOTOSYSTEM II REACTION CENTER PROTEIN Z"/>
    <property type="match status" value="1"/>
</dbReference>
<dbReference type="Pfam" id="PF01737">
    <property type="entry name" value="Ycf9"/>
    <property type="match status" value="1"/>
</dbReference>
<dbReference type="SUPFAM" id="SSF161055">
    <property type="entry name" value="PsbZ-like"/>
    <property type="match status" value="1"/>
</dbReference>
<keyword id="KW-0150">Chloroplast</keyword>
<keyword id="KW-0472">Membrane</keyword>
<keyword id="KW-0602">Photosynthesis</keyword>
<keyword id="KW-0604">Photosystem II</keyword>
<keyword id="KW-0934">Plastid</keyword>
<keyword id="KW-0674">Reaction center</keyword>
<keyword id="KW-1185">Reference proteome</keyword>
<keyword id="KW-0793">Thylakoid</keyword>
<keyword id="KW-0812">Transmembrane</keyword>
<keyword id="KW-1133">Transmembrane helix</keyword>
<geneLocation type="chloroplast"/>
<evidence type="ECO:0000255" key="1">
    <source>
        <dbReference type="HAMAP-Rule" id="MF_00644"/>
    </source>
</evidence>
<name>PSBZ_OSTTA</name>
<feature type="chain" id="PRO_0000277227" description="Photosystem II reaction center protein Z">
    <location>
        <begin position="1"/>
        <end position="62"/>
    </location>
</feature>
<feature type="transmembrane region" description="Helical" evidence="1">
    <location>
        <begin position="8"/>
        <end position="28"/>
    </location>
</feature>
<feature type="transmembrane region" description="Helical" evidence="1">
    <location>
        <begin position="41"/>
        <end position="61"/>
    </location>
</feature>
<reference key="1">
    <citation type="journal article" date="2007" name="Mol. Biol. Evol.">
        <title>The complete chloroplast and mitochondrial DNA sequence of Ostreococcus tauri: organelle genomes of the smallest eukaryote are examples of compaction.</title>
        <authorList>
            <person name="Robbens S."/>
            <person name="Derelle E."/>
            <person name="Ferraz C."/>
            <person name="Wuyts J."/>
            <person name="Moreau H."/>
            <person name="Van de Peer Y."/>
        </authorList>
    </citation>
    <scope>NUCLEOTIDE SEQUENCE [LARGE SCALE GENOMIC DNA]</scope>
    <source>
        <strain>OTTH0595</strain>
    </source>
</reference>
<organism>
    <name type="scientific">Ostreococcus tauri</name>
    <dbReference type="NCBI Taxonomy" id="70448"/>
    <lineage>
        <taxon>Eukaryota</taxon>
        <taxon>Viridiplantae</taxon>
        <taxon>Chlorophyta</taxon>
        <taxon>Mamiellophyceae</taxon>
        <taxon>Mamiellales</taxon>
        <taxon>Bathycoccaceae</taxon>
        <taxon>Ostreococcus</taxon>
    </lineage>
</organism>